<comment type="function">
    <text evidence="1">Catalyzes carboxymethyl transfer from carboxy-S-adenosyl-L-methionine (Cx-SAM) to 5-hydroxyuridine (ho5U) to form 5-carboxymethoxyuridine (cmo5U) at position 34 in tRNAs.</text>
</comment>
<comment type="catalytic activity">
    <reaction evidence="1">
        <text>carboxy-S-adenosyl-L-methionine + 5-hydroxyuridine(34) in tRNA = 5-carboxymethoxyuridine(34) in tRNA + S-adenosyl-L-homocysteine + H(+)</text>
        <dbReference type="Rhea" id="RHEA:52848"/>
        <dbReference type="Rhea" id="RHEA-COMP:13381"/>
        <dbReference type="Rhea" id="RHEA-COMP:13383"/>
        <dbReference type="ChEBI" id="CHEBI:15378"/>
        <dbReference type="ChEBI" id="CHEBI:57856"/>
        <dbReference type="ChEBI" id="CHEBI:134278"/>
        <dbReference type="ChEBI" id="CHEBI:136877"/>
        <dbReference type="ChEBI" id="CHEBI:136879"/>
    </reaction>
</comment>
<comment type="subunit">
    <text evidence="1">Homotetramer.</text>
</comment>
<comment type="similarity">
    <text evidence="1">Belongs to the class I-like SAM-binding methyltransferase superfamily. CmoB family.</text>
</comment>
<protein>
    <recommendedName>
        <fullName evidence="1">tRNA U34 carboxymethyltransferase</fullName>
        <ecNumber evidence="1">2.5.1.-</ecNumber>
    </recommendedName>
</protein>
<keyword id="KW-1185">Reference proteome</keyword>
<keyword id="KW-0808">Transferase</keyword>
<keyword id="KW-0819">tRNA processing</keyword>
<reference key="1">
    <citation type="submission" date="2006-12" db="EMBL/GenBank/DDBJ databases">
        <title>Complete sequence of Shewanella amazonensis SB2B.</title>
        <authorList>
            <consortium name="US DOE Joint Genome Institute"/>
            <person name="Copeland A."/>
            <person name="Lucas S."/>
            <person name="Lapidus A."/>
            <person name="Barry K."/>
            <person name="Detter J.C."/>
            <person name="Glavina del Rio T."/>
            <person name="Hammon N."/>
            <person name="Israni S."/>
            <person name="Dalin E."/>
            <person name="Tice H."/>
            <person name="Pitluck S."/>
            <person name="Munk A.C."/>
            <person name="Brettin T."/>
            <person name="Bruce D."/>
            <person name="Han C."/>
            <person name="Tapia R."/>
            <person name="Gilna P."/>
            <person name="Schmutz J."/>
            <person name="Larimer F."/>
            <person name="Land M."/>
            <person name="Hauser L."/>
            <person name="Kyrpides N."/>
            <person name="Mikhailova N."/>
            <person name="Fredrickson J."/>
            <person name="Richardson P."/>
        </authorList>
    </citation>
    <scope>NUCLEOTIDE SEQUENCE [LARGE SCALE GENOMIC DNA]</scope>
    <source>
        <strain>ATCC BAA-1098 / SB2B</strain>
    </source>
</reference>
<gene>
    <name evidence="1" type="primary">cmoB</name>
    <name type="ordered locus">Sama_1846</name>
</gene>
<organism>
    <name type="scientific">Shewanella amazonensis (strain ATCC BAA-1098 / SB2B)</name>
    <dbReference type="NCBI Taxonomy" id="326297"/>
    <lineage>
        <taxon>Bacteria</taxon>
        <taxon>Pseudomonadati</taxon>
        <taxon>Pseudomonadota</taxon>
        <taxon>Gammaproteobacteria</taxon>
        <taxon>Alteromonadales</taxon>
        <taxon>Shewanellaceae</taxon>
        <taxon>Shewanella</taxon>
    </lineage>
</organism>
<sequence>MISFSSFYRQIADTQLQHWLESLPAILGEWQRQHKHGNLPKWEKVLAKLHYPAPEFLDLKDSVTIGDGLQLDSGQTEKLENLLKILQPWRKGPFHVHGIHIDTEWRSDWKWDRVSPHLSPLTNRTVLDVGCGSGYHMWRMLGAGAKRVVGIDPSALFLCQFEAIKRLIDTELPVHLLPLGIEELPPLDAFDTVFSMGVLYHRRSPIDHLLQLRDQLRMGGELVLETLVVDGDKDTVLVPQDRYGKMNNVWFLPSIDALKLWLEKCDFTDVRCVNVDVTSLAEQRSTPWMQNESLVDYLDPKDVNLTVEGYPAPKRATFIAVKNRSPQDAD</sequence>
<feature type="chain" id="PRO_0000313963" description="tRNA U34 carboxymethyltransferase">
    <location>
        <begin position="1"/>
        <end position="330"/>
    </location>
</feature>
<feature type="binding site" evidence="1">
    <location>
        <position position="91"/>
    </location>
    <ligand>
        <name>carboxy-S-adenosyl-L-methionine</name>
        <dbReference type="ChEBI" id="CHEBI:134278"/>
    </ligand>
</feature>
<feature type="binding site" evidence="1">
    <location>
        <position position="105"/>
    </location>
    <ligand>
        <name>carboxy-S-adenosyl-L-methionine</name>
        <dbReference type="ChEBI" id="CHEBI:134278"/>
    </ligand>
</feature>
<feature type="binding site" evidence="1">
    <location>
        <position position="110"/>
    </location>
    <ligand>
        <name>carboxy-S-adenosyl-L-methionine</name>
        <dbReference type="ChEBI" id="CHEBI:134278"/>
    </ligand>
</feature>
<feature type="binding site" evidence="1">
    <location>
        <position position="130"/>
    </location>
    <ligand>
        <name>carboxy-S-adenosyl-L-methionine</name>
        <dbReference type="ChEBI" id="CHEBI:134278"/>
    </ligand>
</feature>
<feature type="binding site" evidence="1">
    <location>
        <begin position="152"/>
        <end position="154"/>
    </location>
    <ligand>
        <name>carboxy-S-adenosyl-L-methionine</name>
        <dbReference type="ChEBI" id="CHEBI:134278"/>
    </ligand>
</feature>
<feature type="binding site" evidence="1">
    <location>
        <begin position="181"/>
        <end position="182"/>
    </location>
    <ligand>
        <name>carboxy-S-adenosyl-L-methionine</name>
        <dbReference type="ChEBI" id="CHEBI:134278"/>
    </ligand>
</feature>
<feature type="binding site" evidence="1">
    <location>
        <position position="196"/>
    </location>
    <ligand>
        <name>carboxy-S-adenosyl-L-methionine</name>
        <dbReference type="ChEBI" id="CHEBI:134278"/>
    </ligand>
</feature>
<feature type="binding site" evidence="1">
    <location>
        <position position="200"/>
    </location>
    <ligand>
        <name>carboxy-S-adenosyl-L-methionine</name>
        <dbReference type="ChEBI" id="CHEBI:134278"/>
    </ligand>
</feature>
<feature type="binding site" evidence="1">
    <location>
        <position position="315"/>
    </location>
    <ligand>
        <name>carboxy-S-adenosyl-L-methionine</name>
        <dbReference type="ChEBI" id="CHEBI:134278"/>
    </ligand>
</feature>
<name>CMOB_SHEAM</name>
<evidence type="ECO:0000255" key="1">
    <source>
        <dbReference type="HAMAP-Rule" id="MF_01590"/>
    </source>
</evidence>
<proteinExistence type="inferred from homology"/>
<accession>A1S6P5</accession>
<dbReference type="EC" id="2.5.1.-" evidence="1"/>
<dbReference type="EMBL" id="CP000507">
    <property type="protein sequence ID" value="ABM00052.1"/>
    <property type="molecule type" value="Genomic_DNA"/>
</dbReference>
<dbReference type="RefSeq" id="WP_011759959.1">
    <property type="nucleotide sequence ID" value="NC_008700.1"/>
</dbReference>
<dbReference type="SMR" id="A1S6P5"/>
<dbReference type="STRING" id="326297.Sama_1846"/>
<dbReference type="KEGG" id="saz:Sama_1846"/>
<dbReference type="eggNOG" id="COG0500">
    <property type="taxonomic scope" value="Bacteria"/>
</dbReference>
<dbReference type="HOGENOM" id="CLU_052665_0_0_6"/>
<dbReference type="OrthoDB" id="9773188at2"/>
<dbReference type="Proteomes" id="UP000009175">
    <property type="component" value="Chromosome"/>
</dbReference>
<dbReference type="GO" id="GO:0008168">
    <property type="term" value="F:methyltransferase activity"/>
    <property type="evidence" value="ECO:0007669"/>
    <property type="project" value="TreeGrafter"/>
</dbReference>
<dbReference type="GO" id="GO:0016765">
    <property type="term" value="F:transferase activity, transferring alkyl or aryl (other than methyl) groups"/>
    <property type="evidence" value="ECO:0007669"/>
    <property type="project" value="UniProtKB-UniRule"/>
</dbReference>
<dbReference type="GO" id="GO:0002098">
    <property type="term" value="P:tRNA wobble uridine modification"/>
    <property type="evidence" value="ECO:0007669"/>
    <property type="project" value="InterPro"/>
</dbReference>
<dbReference type="CDD" id="cd02440">
    <property type="entry name" value="AdoMet_MTases"/>
    <property type="match status" value="1"/>
</dbReference>
<dbReference type="Gene3D" id="3.40.50.150">
    <property type="entry name" value="Vaccinia Virus protein VP39"/>
    <property type="match status" value="1"/>
</dbReference>
<dbReference type="HAMAP" id="MF_01590">
    <property type="entry name" value="tRNA_carboxymethyltr_CmoB"/>
    <property type="match status" value="1"/>
</dbReference>
<dbReference type="InterPro" id="IPR010017">
    <property type="entry name" value="CmoB"/>
</dbReference>
<dbReference type="InterPro" id="IPR027555">
    <property type="entry name" value="Mo5U34_MeTrfas-like"/>
</dbReference>
<dbReference type="InterPro" id="IPR029063">
    <property type="entry name" value="SAM-dependent_MTases_sf"/>
</dbReference>
<dbReference type="NCBIfam" id="NF011650">
    <property type="entry name" value="PRK15068.1"/>
    <property type="match status" value="1"/>
</dbReference>
<dbReference type="NCBIfam" id="TIGR00452">
    <property type="entry name" value="tRNA 5-methoxyuridine(34)/uridine 5-oxyacetic acid(34) synthase CmoB"/>
    <property type="match status" value="1"/>
</dbReference>
<dbReference type="PANTHER" id="PTHR43464">
    <property type="entry name" value="METHYLTRANSFERASE"/>
    <property type="match status" value="1"/>
</dbReference>
<dbReference type="PANTHER" id="PTHR43464:SF95">
    <property type="entry name" value="TRNA U34 CARBOXYMETHYLTRANSFERASE"/>
    <property type="match status" value="1"/>
</dbReference>
<dbReference type="Pfam" id="PF08003">
    <property type="entry name" value="Methyltransf_9"/>
    <property type="match status" value="1"/>
</dbReference>
<dbReference type="SUPFAM" id="SSF53335">
    <property type="entry name" value="S-adenosyl-L-methionine-dependent methyltransferases"/>
    <property type="match status" value="1"/>
</dbReference>